<organism>
    <name type="scientific">Mus musculus</name>
    <name type="common">Mouse</name>
    <dbReference type="NCBI Taxonomy" id="10090"/>
    <lineage>
        <taxon>Eukaryota</taxon>
        <taxon>Metazoa</taxon>
        <taxon>Chordata</taxon>
        <taxon>Craniata</taxon>
        <taxon>Vertebrata</taxon>
        <taxon>Euteleostomi</taxon>
        <taxon>Mammalia</taxon>
        <taxon>Eutheria</taxon>
        <taxon>Euarchontoglires</taxon>
        <taxon>Glires</taxon>
        <taxon>Rodentia</taxon>
        <taxon>Myomorpha</taxon>
        <taxon>Muroidea</taxon>
        <taxon>Muridae</taxon>
        <taxon>Murinae</taxon>
        <taxon>Mus</taxon>
        <taxon>Mus</taxon>
    </lineage>
</organism>
<protein>
    <recommendedName>
        <fullName evidence="3">Methionine aminopeptidase 2</fullName>
        <shortName evidence="3">MAP 2</shortName>
        <shortName evidence="3">MetAP 2</shortName>
        <ecNumber evidence="3">3.4.11.18</ecNumber>
    </recommendedName>
    <alternativeName>
        <fullName evidence="3">Initiation factor 2-associated 67 kDa glycoprotein</fullName>
        <shortName evidence="3">p67</shortName>
        <shortName evidence="3">p67eIF2</shortName>
    </alternativeName>
    <alternativeName>
        <fullName evidence="3">Peptidase M</fullName>
    </alternativeName>
</protein>
<proteinExistence type="evidence at protein level"/>
<gene>
    <name type="primary">Metap2</name>
    <name type="synonym">Mnpep</name>
    <name type="synonym">P67eif2</name>
</gene>
<name>MAP2_MOUSE</name>
<evidence type="ECO:0000250" key="1"/>
<evidence type="ECO:0000250" key="2">
    <source>
        <dbReference type="UniProtKB" id="P50579"/>
    </source>
</evidence>
<evidence type="ECO:0000255" key="3">
    <source>
        <dbReference type="HAMAP-Rule" id="MF_03175"/>
    </source>
</evidence>
<evidence type="ECO:0000256" key="4">
    <source>
        <dbReference type="SAM" id="MobiDB-lite"/>
    </source>
</evidence>
<sequence>MAGVEQAASFGGHLNGDLDPDDREEGTSSTAEEAAKKKRRKKKKGKGAVSAVQQELDKESGALVDEVAKQLESQALEEKERDDDDEDGDGDADGATGKKKKKKKKKRGPKVQTDPPSVPICDLYPNGVFPKGQECEYPPTQDGRTAAWRTTSEEKKALDQASEEIWNDFREAAEAHRQVRKYVMSWIKPGMTMIEICEKLEDCSRKLIKENGLNAGLAFPTGCSLNNCAAHYTPNAGDTTVLQYDDICKIDFGTHISGRIIDCAFTVTFNPKYDILLTAVKDATNTGIKCAGIDVRLCDVGEAIQEVMESYEVEIDGKTYQVKPIRNLNGHSIGPYRIHAGKTVPIVKGGEATRMEEGEVYAIETFGSTGKGVVHDDMECSHYMKNFDVGHVPIRLPRTKHLLNVINENFGTLAFCRRWLDRLGESKYLMALKNLCDLGIVDPYPPLCDIKGSYTAQFEHTILLRPTCKEVVSRGDDY</sequence>
<accession>O08663</accession>
<dbReference type="EC" id="3.4.11.18" evidence="3"/>
<dbReference type="EMBL" id="AB003144">
    <property type="protein sequence ID" value="BAA19789.1"/>
    <property type="molecule type" value="mRNA"/>
</dbReference>
<dbReference type="EMBL" id="AK076804">
    <property type="protein sequence ID" value="BAC36488.1"/>
    <property type="molecule type" value="mRNA"/>
</dbReference>
<dbReference type="EMBL" id="BC002213">
    <property type="protein sequence ID" value="AAH02213.1"/>
    <property type="molecule type" value="mRNA"/>
</dbReference>
<dbReference type="CCDS" id="CCDS48673.1"/>
<dbReference type="RefSeq" id="NP_062622.1">
    <property type="nucleotide sequence ID" value="NM_019648.3"/>
</dbReference>
<dbReference type="RefSeq" id="XP_006513959.1">
    <property type="nucleotide sequence ID" value="XM_006513896.4"/>
</dbReference>
<dbReference type="RefSeq" id="XP_006513960.1">
    <property type="nucleotide sequence ID" value="XM_006513897.5"/>
</dbReference>
<dbReference type="RefSeq" id="XP_036011787.1">
    <property type="nucleotide sequence ID" value="XM_036155894.1"/>
</dbReference>
<dbReference type="SMR" id="O08663"/>
<dbReference type="BioGRID" id="207891">
    <property type="interactions" value="17"/>
</dbReference>
<dbReference type="FunCoup" id="O08663">
    <property type="interactions" value="3380"/>
</dbReference>
<dbReference type="STRING" id="10090.ENSMUSP00000048285"/>
<dbReference type="BindingDB" id="O08663"/>
<dbReference type="ChEMBL" id="CHEMBL1075272"/>
<dbReference type="MEROPS" id="M24.002"/>
<dbReference type="GlyCosmos" id="O08663">
    <property type="glycosylation" value="1 site, No reported glycans"/>
</dbReference>
<dbReference type="GlyGen" id="O08663">
    <property type="glycosylation" value="2 sites, 1 O-linked glycan (1 site)"/>
</dbReference>
<dbReference type="iPTMnet" id="O08663"/>
<dbReference type="PhosphoSitePlus" id="O08663"/>
<dbReference type="SwissPalm" id="O08663"/>
<dbReference type="jPOST" id="O08663"/>
<dbReference type="PaxDb" id="10090-ENSMUSP00000138006"/>
<dbReference type="PeptideAtlas" id="O08663"/>
<dbReference type="ProteomicsDB" id="295816"/>
<dbReference type="Pumba" id="O08663"/>
<dbReference type="Antibodypedia" id="4578">
    <property type="antibodies" value="310 antibodies from 35 providers"/>
</dbReference>
<dbReference type="DNASU" id="56307"/>
<dbReference type="Ensembl" id="ENSMUST00000047910.15">
    <property type="protein sequence ID" value="ENSMUSP00000048285.8"/>
    <property type="gene ID" value="ENSMUSG00000036112.16"/>
</dbReference>
<dbReference type="Ensembl" id="ENSMUST00000180840.8">
    <property type="protein sequence ID" value="ENSMUSP00000138006.2"/>
    <property type="gene ID" value="ENSMUSG00000036112.16"/>
</dbReference>
<dbReference type="GeneID" id="56307"/>
<dbReference type="KEGG" id="mmu:56307"/>
<dbReference type="UCSC" id="uc007gve.1">
    <property type="organism name" value="mouse"/>
</dbReference>
<dbReference type="AGR" id="MGI:1929701"/>
<dbReference type="CTD" id="10988"/>
<dbReference type="MGI" id="MGI:1929701">
    <property type="gene designation" value="Metap2"/>
</dbReference>
<dbReference type="VEuPathDB" id="HostDB:ENSMUSG00000036112"/>
<dbReference type="eggNOG" id="KOG2775">
    <property type="taxonomic scope" value="Eukaryota"/>
</dbReference>
<dbReference type="GeneTree" id="ENSGT00940000155016"/>
<dbReference type="HOGENOM" id="CLU_015857_7_2_1"/>
<dbReference type="InParanoid" id="O08663"/>
<dbReference type="OMA" id="GNGWVYD"/>
<dbReference type="PhylomeDB" id="O08663"/>
<dbReference type="TreeFam" id="TF300426"/>
<dbReference type="BRENDA" id="3.4.11.18">
    <property type="organism ID" value="3474"/>
</dbReference>
<dbReference type="Reactome" id="R-MMU-2514859">
    <property type="pathway name" value="Inactivation, recovery and regulation of the phototransduction cascade"/>
</dbReference>
<dbReference type="BioGRID-ORCS" id="56307">
    <property type="hits" value="25 hits in 78 CRISPR screens"/>
</dbReference>
<dbReference type="ChiTaRS" id="Metap2">
    <property type="organism name" value="mouse"/>
</dbReference>
<dbReference type="PRO" id="PR:O08663"/>
<dbReference type="Proteomes" id="UP000000589">
    <property type="component" value="Chromosome 10"/>
</dbReference>
<dbReference type="RNAct" id="O08663">
    <property type="molecule type" value="protein"/>
</dbReference>
<dbReference type="Bgee" id="ENSMUSG00000036112">
    <property type="expression patterns" value="Expressed in retinal neural layer and 232 other cell types or tissues"/>
</dbReference>
<dbReference type="ExpressionAtlas" id="O08663">
    <property type="expression patterns" value="baseline and differential"/>
</dbReference>
<dbReference type="GO" id="GO:0005737">
    <property type="term" value="C:cytoplasm"/>
    <property type="evidence" value="ECO:0000250"/>
    <property type="project" value="HGNC-UCL"/>
</dbReference>
<dbReference type="GO" id="GO:0005829">
    <property type="term" value="C:cytosol"/>
    <property type="evidence" value="ECO:0007669"/>
    <property type="project" value="Ensembl"/>
</dbReference>
<dbReference type="GO" id="GO:0005886">
    <property type="term" value="C:plasma membrane"/>
    <property type="evidence" value="ECO:0007669"/>
    <property type="project" value="Ensembl"/>
</dbReference>
<dbReference type="GO" id="GO:0004177">
    <property type="term" value="F:aminopeptidase activity"/>
    <property type="evidence" value="ECO:0000250"/>
    <property type="project" value="UniProtKB"/>
</dbReference>
<dbReference type="GO" id="GO:0004239">
    <property type="term" value="F:initiator methionyl aminopeptidase activity"/>
    <property type="evidence" value="ECO:0007669"/>
    <property type="project" value="UniProtKB-UniRule"/>
</dbReference>
<dbReference type="GO" id="GO:0046872">
    <property type="term" value="F:metal ion binding"/>
    <property type="evidence" value="ECO:0007669"/>
    <property type="project" value="UniProtKB-UniRule"/>
</dbReference>
<dbReference type="GO" id="GO:0070006">
    <property type="term" value="F:metalloaminopeptidase activity"/>
    <property type="evidence" value="ECO:0007669"/>
    <property type="project" value="UniProtKB-UniRule"/>
</dbReference>
<dbReference type="GO" id="GO:0008235">
    <property type="term" value="F:metalloexopeptidase activity"/>
    <property type="evidence" value="ECO:0000250"/>
    <property type="project" value="HGNC-UCL"/>
</dbReference>
<dbReference type="GO" id="GO:0016485">
    <property type="term" value="P:protein processing"/>
    <property type="evidence" value="ECO:0000250"/>
    <property type="project" value="HGNC-UCL"/>
</dbReference>
<dbReference type="GO" id="GO:0006446">
    <property type="term" value="P:regulation of translational initiation"/>
    <property type="evidence" value="ECO:0007669"/>
    <property type="project" value="Ensembl"/>
</dbReference>
<dbReference type="CDD" id="cd01088">
    <property type="entry name" value="MetAP2"/>
    <property type="match status" value="1"/>
</dbReference>
<dbReference type="FunFam" id="1.10.10.10:FF:000106">
    <property type="entry name" value="Methionine aminopeptidase 2"/>
    <property type="match status" value="1"/>
</dbReference>
<dbReference type="FunFam" id="3.90.230.10:FF:000003">
    <property type="entry name" value="Methionine aminopeptidase 2"/>
    <property type="match status" value="1"/>
</dbReference>
<dbReference type="Gene3D" id="3.90.230.10">
    <property type="entry name" value="Creatinase/methionine aminopeptidase superfamily"/>
    <property type="match status" value="1"/>
</dbReference>
<dbReference type="Gene3D" id="1.10.10.10">
    <property type="entry name" value="Winged helix-like DNA-binding domain superfamily/Winged helix DNA-binding domain"/>
    <property type="match status" value="1"/>
</dbReference>
<dbReference type="HAMAP" id="MF_03175">
    <property type="entry name" value="MetAP_2_euk"/>
    <property type="match status" value="1"/>
</dbReference>
<dbReference type="InterPro" id="IPR036005">
    <property type="entry name" value="Creatinase/aminopeptidase-like"/>
</dbReference>
<dbReference type="InterPro" id="IPR050247">
    <property type="entry name" value="Met_Aminopeptidase_Type2"/>
</dbReference>
<dbReference type="InterPro" id="IPR000994">
    <property type="entry name" value="Pept_M24"/>
</dbReference>
<dbReference type="InterPro" id="IPR001714">
    <property type="entry name" value="Pept_M24_MAP"/>
</dbReference>
<dbReference type="InterPro" id="IPR002468">
    <property type="entry name" value="Pept_M24A_MAP2"/>
</dbReference>
<dbReference type="InterPro" id="IPR018349">
    <property type="entry name" value="Pept_M24A_MAP2_BS"/>
</dbReference>
<dbReference type="InterPro" id="IPR036388">
    <property type="entry name" value="WH-like_DNA-bd_sf"/>
</dbReference>
<dbReference type="InterPro" id="IPR036390">
    <property type="entry name" value="WH_DNA-bd_sf"/>
</dbReference>
<dbReference type="NCBIfam" id="TIGR00501">
    <property type="entry name" value="met_pdase_II"/>
    <property type="match status" value="1"/>
</dbReference>
<dbReference type="PANTHER" id="PTHR45777">
    <property type="entry name" value="METHIONINE AMINOPEPTIDASE 2"/>
    <property type="match status" value="1"/>
</dbReference>
<dbReference type="PANTHER" id="PTHR45777:SF2">
    <property type="entry name" value="METHIONINE AMINOPEPTIDASE 2"/>
    <property type="match status" value="1"/>
</dbReference>
<dbReference type="Pfam" id="PF00557">
    <property type="entry name" value="Peptidase_M24"/>
    <property type="match status" value="1"/>
</dbReference>
<dbReference type="PRINTS" id="PR00599">
    <property type="entry name" value="MAPEPTIDASE"/>
</dbReference>
<dbReference type="SUPFAM" id="SSF55920">
    <property type="entry name" value="Creatinase/aminopeptidase"/>
    <property type="match status" value="1"/>
</dbReference>
<dbReference type="SUPFAM" id="SSF46785">
    <property type="entry name" value="Winged helix' DNA-binding domain"/>
    <property type="match status" value="1"/>
</dbReference>
<dbReference type="PROSITE" id="PS01202">
    <property type="entry name" value="MAP_2"/>
    <property type="match status" value="1"/>
</dbReference>
<reference key="1">
    <citation type="submission" date="1997-04" db="EMBL/GenBank/DDBJ databases">
        <authorList>
            <person name="Sekiguchi S."/>
            <person name="Suzuki E."/>
        </authorList>
    </citation>
    <scope>NUCLEOTIDE SEQUENCE [MRNA]</scope>
    <source>
        <strain>C57BL/6 X CBA</strain>
        <tissue>Liver</tissue>
    </source>
</reference>
<reference key="2">
    <citation type="journal article" date="2005" name="Science">
        <title>The transcriptional landscape of the mammalian genome.</title>
        <authorList>
            <person name="Carninci P."/>
            <person name="Kasukawa T."/>
            <person name="Katayama S."/>
            <person name="Gough J."/>
            <person name="Frith M.C."/>
            <person name="Maeda N."/>
            <person name="Oyama R."/>
            <person name="Ravasi T."/>
            <person name="Lenhard B."/>
            <person name="Wells C."/>
            <person name="Kodzius R."/>
            <person name="Shimokawa K."/>
            <person name="Bajic V.B."/>
            <person name="Brenner S.E."/>
            <person name="Batalov S."/>
            <person name="Forrest A.R."/>
            <person name="Zavolan M."/>
            <person name="Davis M.J."/>
            <person name="Wilming L.G."/>
            <person name="Aidinis V."/>
            <person name="Allen J.E."/>
            <person name="Ambesi-Impiombato A."/>
            <person name="Apweiler R."/>
            <person name="Aturaliya R.N."/>
            <person name="Bailey T.L."/>
            <person name="Bansal M."/>
            <person name="Baxter L."/>
            <person name="Beisel K.W."/>
            <person name="Bersano T."/>
            <person name="Bono H."/>
            <person name="Chalk A.M."/>
            <person name="Chiu K.P."/>
            <person name="Choudhary V."/>
            <person name="Christoffels A."/>
            <person name="Clutterbuck D.R."/>
            <person name="Crowe M.L."/>
            <person name="Dalla E."/>
            <person name="Dalrymple B.P."/>
            <person name="de Bono B."/>
            <person name="Della Gatta G."/>
            <person name="di Bernardo D."/>
            <person name="Down T."/>
            <person name="Engstrom P."/>
            <person name="Fagiolini M."/>
            <person name="Faulkner G."/>
            <person name="Fletcher C.F."/>
            <person name="Fukushima T."/>
            <person name="Furuno M."/>
            <person name="Futaki S."/>
            <person name="Gariboldi M."/>
            <person name="Georgii-Hemming P."/>
            <person name="Gingeras T.R."/>
            <person name="Gojobori T."/>
            <person name="Green R.E."/>
            <person name="Gustincich S."/>
            <person name="Harbers M."/>
            <person name="Hayashi Y."/>
            <person name="Hensch T.K."/>
            <person name="Hirokawa N."/>
            <person name="Hill D."/>
            <person name="Huminiecki L."/>
            <person name="Iacono M."/>
            <person name="Ikeo K."/>
            <person name="Iwama A."/>
            <person name="Ishikawa T."/>
            <person name="Jakt M."/>
            <person name="Kanapin A."/>
            <person name="Katoh M."/>
            <person name="Kawasawa Y."/>
            <person name="Kelso J."/>
            <person name="Kitamura H."/>
            <person name="Kitano H."/>
            <person name="Kollias G."/>
            <person name="Krishnan S.P."/>
            <person name="Kruger A."/>
            <person name="Kummerfeld S.K."/>
            <person name="Kurochkin I.V."/>
            <person name="Lareau L.F."/>
            <person name="Lazarevic D."/>
            <person name="Lipovich L."/>
            <person name="Liu J."/>
            <person name="Liuni S."/>
            <person name="McWilliam S."/>
            <person name="Madan Babu M."/>
            <person name="Madera M."/>
            <person name="Marchionni L."/>
            <person name="Matsuda H."/>
            <person name="Matsuzawa S."/>
            <person name="Miki H."/>
            <person name="Mignone F."/>
            <person name="Miyake S."/>
            <person name="Morris K."/>
            <person name="Mottagui-Tabar S."/>
            <person name="Mulder N."/>
            <person name="Nakano N."/>
            <person name="Nakauchi H."/>
            <person name="Ng P."/>
            <person name="Nilsson R."/>
            <person name="Nishiguchi S."/>
            <person name="Nishikawa S."/>
            <person name="Nori F."/>
            <person name="Ohara O."/>
            <person name="Okazaki Y."/>
            <person name="Orlando V."/>
            <person name="Pang K.C."/>
            <person name="Pavan W.J."/>
            <person name="Pavesi G."/>
            <person name="Pesole G."/>
            <person name="Petrovsky N."/>
            <person name="Piazza S."/>
            <person name="Reed J."/>
            <person name="Reid J.F."/>
            <person name="Ring B.Z."/>
            <person name="Ringwald M."/>
            <person name="Rost B."/>
            <person name="Ruan Y."/>
            <person name="Salzberg S.L."/>
            <person name="Sandelin A."/>
            <person name="Schneider C."/>
            <person name="Schoenbach C."/>
            <person name="Sekiguchi K."/>
            <person name="Semple C.A."/>
            <person name="Seno S."/>
            <person name="Sessa L."/>
            <person name="Sheng Y."/>
            <person name="Shibata Y."/>
            <person name="Shimada H."/>
            <person name="Shimada K."/>
            <person name="Silva D."/>
            <person name="Sinclair B."/>
            <person name="Sperling S."/>
            <person name="Stupka E."/>
            <person name="Sugiura K."/>
            <person name="Sultana R."/>
            <person name="Takenaka Y."/>
            <person name="Taki K."/>
            <person name="Tammoja K."/>
            <person name="Tan S.L."/>
            <person name="Tang S."/>
            <person name="Taylor M.S."/>
            <person name="Tegner J."/>
            <person name="Teichmann S.A."/>
            <person name="Ueda H.R."/>
            <person name="van Nimwegen E."/>
            <person name="Verardo R."/>
            <person name="Wei C.L."/>
            <person name="Yagi K."/>
            <person name="Yamanishi H."/>
            <person name="Zabarovsky E."/>
            <person name="Zhu S."/>
            <person name="Zimmer A."/>
            <person name="Hide W."/>
            <person name="Bult C."/>
            <person name="Grimmond S.M."/>
            <person name="Teasdale R.D."/>
            <person name="Liu E.T."/>
            <person name="Brusic V."/>
            <person name="Quackenbush J."/>
            <person name="Wahlestedt C."/>
            <person name="Mattick J.S."/>
            <person name="Hume D.A."/>
            <person name="Kai C."/>
            <person name="Sasaki D."/>
            <person name="Tomaru Y."/>
            <person name="Fukuda S."/>
            <person name="Kanamori-Katayama M."/>
            <person name="Suzuki M."/>
            <person name="Aoki J."/>
            <person name="Arakawa T."/>
            <person name="Iida J."/>
            <person name="Imamura K."/>
            <person name="Itoh M."/>
            <person name="Kato T."/>
            <person name="Kawaji H."/>
            <person name="Kawagashira N."/>
            <person name="Kawashima T."/>
            <person name="Kojima M."/>
            <person name="Kondo S."/>
            <person name="Konno H."/>
            <person name="Nakano K."/>
            <person name="Ninomiya N."/>
            <person name="Nishio T."/>
            <person name="Okada M."/>
            <person name="Plessy C."/>
            <person name="Shibata K."/>
            <person name="Shiraki T."/>
            <person name="Suzuki S."/>
            <person name="Tagami M."/>
            <person name="Waki K."/>
            <person name="Watahiki A."/>
            <person name="Okamura-Oho Y."/>
            <person name="Suzuki H."/>
            <person name="Kawai J."/>
            <person name="Hayashizaki Y."/>
        </authorList>
    </citation>
    <scope>NUCLEOTIDE SEQUENCE [LARGE SCALE MRNA]</scope>
    <source>
        <strain>C57BL/6J</strain>
        <tissue>Testis</tissue>
    </source>
</reference>
<reference key="3">
    <citation type="journal article" date="2004" name="Genome Res.">
        <title>The status, quality, and expansion of the NIH full-length cDNA project: the Mammalian Gene Collection (MGC).</title>
        <authorList>
            <consortium name="The MGC Project Team"/>
        </authorList>
    </citation>
    <scope>NUCLEOTIDE SEQUENCE [LARGE SCALE MRNA]</scope>
    <source>
        <strain>C57BL/6J</strain>
        <tissue>Mammary gland</tissue>
    </source>
</reference>
<reference key="4">
    <citation type="submission" date="2009-01" db="UniProtKB">
        <authorList>
            <person name="Lubec G."/>
            <person name="Sunyer B."/>
            <person name="Chen W.-Q."/>
        </authorList>
    </citation>
    <scope>PROTEIN SEQUENCE OF 260-281; 297-318; 355-371 AND 386-395</scope>
    <scope>IDENTIFICATION BY MASS SPECTROMETRY</scope>
    <source>
        <strain>OF1</strain>
        <tissue>Hippocampus</tissue>
    </source>
</reference>
<reference key="5">
    <citation type="journal article" date="2010" name="Cell">
        <title>A tissue-specific atlas of mouse protein phosphorylation and expression.</title>
        <authorList>
            <person name="Huttlin E.L."/>
            <person name="Jedrychowski M.P."/>
            <person name="Elias J.E."/>
            <person name="Goswami T."/>
            <person name="Rad R."/>
            <person name="Beausoleil S.A."/>
            <person name="Villen J."/>
            <person name="Haas W."/>
            <person name="Sowa M.E."/>
            <person name="Gygi S.P."/>
        </authorList>
    </citation>
    <scope>IDENTIFICATION BY MASS SPECTROMETRY [LARGE SCALE ANALYSIS]</scope>
    <source>
        <tissue>Brain</tissue>
        <tissue>Brown adipose tissue</tissue>
        <tissue>Heart</tissue>
        <tissue>Kidney</tissue>
        <tissue>Liver</tissue>
        <tissue>Lung</tissue>
        <tissue>Pancreas</tissue>
        <tissue>Spleen</tissue>
        <tissue>Testis</tissue>
    </source>
</reference>
<comment type="function">
    <text evidence="3">Cotranslationally removes the N-terminal methionine from nascent proteins. The N-terminal methionine is often cleaved when the second residue in the primary sequence is small and uncharged (Met-Ala-, Cys, Gly, Pro, Ser, Thr, or Val).</text>
</comment>
<comment type="function">
    <text evidence="3">Protects eukaryotic initiation factor EIF2S1 from translation-inhibiting phosphorylation by inhibitory kinases such as EIF2AK2/PKR and EIF2AK1/HCR. Plays a critical role in the regulation of protein synthesis.</text>
</comment>
<comment type="catalytic activity">
    <reaction evidence="3">
        <text>Release of N-terminal amino acids, preferentially methionine, from peptides and arylamides.</text>
        <dbReference type="EC" id="3.4.11.18"/>
    </reaction>
</comment>
<comment type="cofactor">
    <cofactor evidence="3">
        <name>Co(2+)</name>
        <dbReference type="ChEBI" id="CHEBI:48828"/>
    </cofactor>
    <cofactor evidence="3">
        <name>Zn(2+)</name>
        <dbReference type="ChEBI" id="CHEBI:29105"/>
    </cofactor>
    <cofactor evidence="3">
        <name>Mn(2+)</name>
        <dbReference type="ChEBI" id="CHEBI:29035"/>
    </cofactor>
    <cofactor evidence="3">
        <name>Fe(2+)</name>
        <dbReference type="ChEBI" id="CHEBI:29033"/>
    </cofactor>
    <text evidence="3">Binds 2 divalent metal cations per subunit. Has a high-affinity and a low affinity metal-binding site. The true nature of the physiological cofactor is under debate. The enzyme is active with cobalt, zinc, manganese or divalent iron ions. Most likely, methionine aminopeptidases function as mononuclear Fe(2+)-metalloproteases under physiological conditions, and the catalytically relevant metal-binding site has been assigned to the histidine-containing high-affinity site.</text>
</comment>
<comment type="subunit">
    <text evidence="3">Binds EIF2S1 at low magnesium concentrations. Interacts strongly with the eIF-2 gamma-subunit EIF2S3.</text>
</comment>
<comment type="subcellular location">
    <subcellularLocation>
        <location>Cytoplasm</location>
    </subcellularLocation>
    <text evidence="3">About 30% of expressed METAP2 associates with polysomes.</text>
</comment>
<comment type="PTM">
    <text evidence="3">Contains approximately 12 O-linked N-acetylglucosamine (GlcNAc) residues. O-glycosylation is required for EIF2S1 binding.</text>
</comment>
<comment type="similarity">
    <text evidence="3">Belongs to the peptidase M24A family. Methionine aminopeptidase eukaryotic type 2 subfamily.</text>
</comment>
<keyword id="KW-0007">Acetylation</keyword>
<keyword id="KW-0031">Aminopeptidase</keyword>
<keyword id="KW-0963">Cytoplasm</keyword>
<keyword id="KW-0903">Direct protein sequencing</keyword>
<keyword id="KW-0325">Glycoprotein</keyword>
<keyword id="KW-0378">Hydrolase</keyword>
<keyword id="KW-0479">Metal-binding</keyword>
<keyword id="KW-0597">Phosphoprotein</keyword>
<keyword id="KW-0645">Protease</keyword>
<keyword id="KW-1185">Reference proteome</keyword>
<feature type="initiator methionine" description="Removed" evidence="2">
    <location>
        <position position="1"/>
    </location>
</feature>
<feature type="chain" id="PRO_0000148983" description="Methionine aminopeptidase 2">
    <location>
        <begin position="2"/>
        <end position="478"/>
    </location>
</feature>
<feature type="region of interest" description="Disordered" evidence="4">
    <location>
        <begin position="1"/>
        <end position="122"/>
    </location>
</feature>
<feature type="compositionally biased region" description="Basic residues" evidence="4">
    <location>
        <begin position="36"/>
        <end position="46"/>
    </location>
</feature>
<feature type="compositionally biased region" description="Acidic residues" evidence="4">
    <location>
        <begin position="80"/>
        <end position="92"/>
    </location>
</feature>
<feature type="compositionally biased region" description="Basic residues" evidence="4">
    <location>
        <begin position="97"/>
        <end position="109"/>
    </location>
</feature>
<feature type="binding site" evidence="3">
    <location>
        <position position="231"/>
    </location>
    <ligand>
        <name>substrate</name>
    </ligand>
</feature>
<feature type="binding site" evidence="3">
    <location>
        <position position="251"/>
    </location>
    <ligand>
        <name>a divalent metal cation</name>
        <dbReference type="ChEBI" id="CHEBI:60240"/>
        <label>1</label>
    </ligand>
</feature>
<feature type="binding site" evidence="3">
    <location>
        <position position="262"/>
    </location>
    <ligand>
        <name>a divalent metal cation</name>
        <dbReference type="ChEBI" id="CHEBI:60240"/>
        <label>1</label>
    </ligand>
</feature>
<feature type="binding site" evidence="3">
    <location>
        <position position="262"/>
    </location>
    <ligand>
        <name>a divalent metal cation</name>
        <dbReference type="ChEBI" id="CHEBI:60240"/>
        <label>2</label>
        <note>catalytic</note>
    </ligand>
</feature>
<feature type="binding site" evidence="3">
    <location>
        <position position="331"/>
    </location>
    <ligand>
        <name>a divalent metal cation</name>
        <dbReference type="ChEBI" id="CHEBI:60240"/>
        <label>2</label>
        <note>catalytic</note>
    </ligand>
</feature>
<feature type="binding site" evidence="3">
    <location>
        <position position="339"/>
    </location>
    <ligand>
        <name>substrate</name>
    </ligand>
</feature>
<feature type="binding site" evidence="3">
    <location>
        <position position="364"/>
    </location>
    <ligand>
        <name>a divalent metal cation</name>
        <dbReference type="ChEBI" id="CHEBI:60240"/>
        <label>2</label>
        <note>catalytic</note>
    </ligand>
</feature>
<feature type="binding site" evidence="3">
    <location>
        <position position="459"/>
    </location>
    <ligand>
        <name>a divalent metal cation</name>
        <dbReference type="ChEBI" id="CHEBI:60240"/>
        <label>1</label>
    </ligand>
</feature>
<feature type="binding site" evidence="3">
    <location>
        <position position="459"/>
    </location>
    <ligand>
        <name>a divalent metal cation</name>
        <dbReference type="ChEBI" id="CHEBI:60240"/>
        <label>2</label>
        <note>catalytic</note>
    </ligand>
</feature>
<feature type="modified residue" description="N-acetylalanine" evidence="2">
    <location>
        <position position="2"/>
    </location>
</feature>
<feature type="modified residue" description="Phosphoserine; alternate" evidence="2">
    <location>
        <position position="60"/>
    </location>
</feature>
<feature type="glycosylation site" description="O-linked (GlcNAc) serine; alternate" evidence="1">
    <location>
        <position position="60"/>
    </location>
</feature>